<feature type="chain" id="PRO_0000153333" description="Histidinol-phosphate aminotransferase">
    <location>
        <begin position="1"/>
        <end position="355"/>
    </location>
</feature>
<feature type="modified residue" description="N6-(pyridoxal phosphate)lysine" evidence="1">
    <location>
        <position position="214"/>
    </location>
</feature>
<dbReference type="EC" id="2.6.1.9"/>
<dbReference type="EMBL" id="AF067228">
    <property type="protein sequence ID" value="AAC97356.1"/>
    <property type="molecule type" value="Genomic_DNA"/>
</dbReference>
<dbReference type="EMBL" id="AE013218">
    <property type="protein sequence ID" value="AAM67664.1"/>
    <property type="molecule type" value="Genomic_DNA"/>
</dbReference>
<dbReference type="RefSeq" id="WP_011053630.1">
    <property type="nucleotide sequence ID" value="NC_004061.1"/>
</dbReference>
<dbReference type="SMR" id="Q9ZHE5"/>
<dbReference type="STRING" id="198804.BUsg_094"/>
<dbReference type="GeneID" id="93003563"/>
<dbReference type="KEGG" id="bas:BUsg_094"/>
<dbReference type="eggNOG" id="COG0079">
    <property type="taxonomic scope" value="Bacteria"/>
</dbReference>
<dbReference type="HOGENOM" id="CLU_017584_3_1_6"/>
<dbReference type="UniPathway" id="UPA00031">
    <property type="reaction ID" value="UER00012"/>
</dbReference>
<dbReference type="Proteomes" id="UP000000416">
    <property type="component" value="Chromosome"/>
</dbReference>
<dbReference type="GO" id="GO:0004400">
    <property type="term" value="F:histidinol-phosphate transaminase activity"/>
    <property type="evidence" value="ECO:0007669"/>
    <property type="project" value="UniProtKB-UniRule"/>
</dbReference>
<dbReference type="GO" id="GO:0030170">
    <property type="term" value="F:pyridoxal phosphate binding"/>
    <property type="evidence" value="ECO:0007669"/>
    <property type="project" value="InterPro"/>
</dbReference>
<dbReference type="GO" id="GO:0000105">
    <property type="term" value="P:L-histidine biosynthetic process"/>
    <property type="evidence" value="ECO:0007669"/>
    <property type="project" value="UniProtKB-UniRule"/>
</dbReference>
<dbReference type="CDD" id="cd00609">
    <property type="entry name" value="AAT_like"/>
    <property type="match status" value="1"/>
</dbReference>
<dbReference type="Gene3D" id="3.90.1150.10">
    <property type="entry name" value="Aspartate Aminotransferase, domain 1"/>
    <property type="match status" value="1"/>
</dbReference>
<dbReference type="Gene3D" id="3.40.640.10">
    <property type="entry name" value="Type I PLP-dependent aspartate aminotransferase-like (Major domain)"/>
    <property type="match status" value="1"/>
</dbReference>
<dbReference type="HAMAP" id="MF_01023">
    <property type="entry name" value="HisC_aminotrans_2"/>
    <property type="match status" value="1"/>
</dbReference>
<dbReference type="InterPro" id="IPR001917">
    <property type="entry name" value="Aminotrans_II_pyridoxalP_BS"/>
</dbReference>
<dbReference type="InterPro" id="IPR004839">
    <property type="entry name" value="Aminotransferase_I/II_large"/>
</dbReference>
<dbReference type="InterPro" id="IPR005861">
    <property type="entry name" value="HisP_aminotrans"/>
</dbReference>
<dbReference type="InterPro" id="IPR015424">
    <property type="entry name" value="PyrdxlP-dep_Trfase"/>
</dbReference>
<dbReference type="InterPro" id="IPR015421">
    <property type="entry name" value="PyrdxlP-dep_Trfase_major"/>
</dbReference>
<dbReference type="InterPro" id="IPR015422">
    <property type="entry name" value="PyrdxlP-dep_Trfase_small"/>
</dbReference>
<dbReference type="NCBIfam" id="TIGR01141">
    <property type="entry name" value="hisC"/>
    <property type="match status" value="1"/>
</dbReference>
<dbReference type="PANTHER" id="PTHR42885:SF2">
    <property type="entry name" value="HISTIDINOL-PHOSPHATE AMINOTRANSFERASE"/>
    <property type="match status" value="1"/>
</dbReference>
<dbReference type="PANTHER" id="PTHR42885">
    <property type="entry name" value="HISTIDINOL-PHOSPHATE AMINOTRANSFERASE-RELATED"/>
    <property type="match status" value="1"/>
</dbReference>
<dbReference type="Pfam" id="PF00155">
    <property type="entry name" value="Aminotran_1_2"/>
    <property type="match status" value="1"/>
</dbReference>
<dbReference type="SUPFAM" id="SSF53383">
    <property type="entry name" value="PLP-dependent transferases"/>
    <property type="match status" value="1"/>
</dbReference>
<dbReference type="PROSITE" id="PS00599">
    <property type="entry name" value="AA_TRANSFER_CLASS_2"/>
    <property type="match status" value="1"/>
</dbReference>
<organism>
    <name type="scientific">Buchnera aphidicola subsp. Schizaphis graminum (strain Sg)</name>
    <dbReference type="NCBI Taxonomy" id="198804"/>
    <lineage>
        <taxon>Bacteria</taxon>
        <taxon>Pseudomonadati</taxon>
        <taxon>Pseudomonadota</taxon>
        <taxon>Gammaproteobacteria</taxon>
        <taxon>Enterobacterales</taxon>
        <taxon>Erwiniaceae</taxon>
        <taxon>Buchnera</taxon>
    </lineage>
</organism>
<accession>Q9ZHE5</accession>
<gene>
    <name type="primary">hisC</name>
    <name type="ordered locus">BUsg_094</name>
</gene>
<keyword id="KW-0028">Amino-acid biosynthesis</keyword>
<keyword id="KW-0032">Aminotransferase</keyword>
<keyword id="KW-0368">Histidine biosynthesis</keyword>
<keyword id="KW-0663">Pyridoxal phosphate</keyword>
<keyword id="KW-0808">Transferase</keyword>
<proteinExistence type="inferred from homology"/>
<name>HIS8_BUCAP</name>
<comment type="catalytic activity">
    <reaction>
        <text>L-histidinol phosphate + 2-oxoglutarate = 3-(imidazol-4-yl)-2-oxopropyl phosphate + L-glutamate</text>
        <dbReference type="Rhea" id="RHEA:23744"/>
        <dbReference type="ChEBI" id="CHEBI:16810"/>
        <dbReference type="ChEBI" id="CHEBI:29985"/>
        <dbReference type="ChEBI" id="CHEBI:57766"/>
        <dbReference type="ChEBI" id="CHEBI:57980"/>
        <dbReference type="EC" id="2.6.1.9"/>
    </reaction>
</comment>
<comment type="cofactor">
    <cofactor evidence="1">
        <name>pyridoxal 5'-phosphate</name>
        <dbReference type="ChEBI" id="CHEBI:597326"/>
    </cofactor>
</comment>
<comment type="pathway">
    <text>Amino-acid biosynthesis; L-histidine biosynthesis; L-histidine from 5-phospho-alpha-D-ribose 1-diphosphate: step 7/9.</text>
</comment>
<comment type="subunit">
    <text evidence="1">Homodimer.</text>
</comment>
<comment type="similarity">
    <text evidence="2">Belongs to the class-II pyridoxal-phosphate-dependent aminotransferase family. Histidinol-phosphate aminotransferase subfamily.</text>
</comment>
<reference key="1">
    <citation type="journal article" date="1998" name="Curr. Microbiol.">
        <title>Buchnera aphidicola (Aphid endosymbiont) contains genes encoding enzymes of histidine biosynthesis.</title>
        <authorList>
            <person name="Clark M.A."/>
            <person name="Baumann L."/>
            <person name="Baumann P."/>
        </authorList>
    </citation>
    <scope>NUCLEOTIDE SEQUENCE [GENOMIC DNA]</scope>
</reference>
<reference key="2">
    <citation type="journal article" date="2002" name="Science">
        <title>50 million years of genomic stasis in endosymbiotic bacteria.</title>
        <authorList>
            <person name="Tamas I."/>
            <person name="Klasson L."/>
            <person name="Canbaeck B."/>
            <person name="Naeslund A.K."/>
            <person name="Eriksson A.-S."/>
            <person name="Wernegreen J.J."/>
            <person name="Sandstroem J.P."/>
            <person name="Moran N.A."/>
            <person name="Andersson S.G.E."/>
        </authorList>
    </citation>
    <scope>NUCLEOTIDE SEQUENCE [LARGE SCALE GENOMIC DNA]</scope>
    <source>
        <strain>Sg</strain>
    </source>
</reference>
<protein>
    <recommendedName>
        <fullName>Histidinol-phosphate aminotransferase</fullName>
        <ecNumber>2.6.1.9</ecNumber>
    </recommendedName>
    <alternativeName>
        <fullName>Imidazole acetol-phosphate transaminase</fullName>
    </alternativeName>
</protein>
<evidence type="ECO:0000250" key="1"/>
<evidence type="ECO:0000305" key="2"/>
<sequence length="355" mass="40474">MTANINKLARKNIQKLNPYQSARRIGGKGDTWLNANESPISVPFKGKVKVFNRYPECQPNNLLSSYANYVGLLNNQILVTRGADEGIELLIKAFCEPGKDAIIYCPPTYDMYAINAKIANVEIKEIPTFKNTWKIDLLNIRSNLNKVKLIYICNPNNPTGNIVSQEDLKSLLKVTLGQSLVIIDEAYIEFSPKNSMVNYLKTFPNLIILRTLSKAFALAGIRCGFTLAQKEVIDILHKVISPYPISTLIADIAVQSLEKKAIDDMKNRVLKLNMNRIWLIDELKKISCVKKVFDSHANYILVEFYMFKKIFQSLWQKGIILRNQNHKNNLKNCLRISIGSKSECMRLVQELKNFI</sequence>